<dbReference type="EMBL" id="CU928158">
    <property type="protein sequence ID" value="CAQ90094.1"/>
    <property type="molecule type" value="Genomic_DNA"/>
</dbReference>
<dbReference type="RefSeq" id="WP_001138904.1">
    <property type="nucleotide sequence ID" value="NC_011740.1"/>
</dbReference>
<dbReference type="SMR" id="B7LMG1"/>
<dbReference type="GeneID" id="93777034"/>
<dbReference type="KEGG" id="efe:EFER_2599"/>
<dbReference type="HOGENOM" id="CLU_099839_1_0_6"/>
<dbReference type="OrthoDB" id="9801447at2"/>
<dbReference type="Proteomes" id="UP000000745">
    <property type="component" value="Chromosome"/>
</dbReference>
<dbReference type="GO" id="GO:0005829">
    <property type="term" value="C:cytosol"/>
    <property type="evidence" value="ECO:0007669"/>
    <property type="project" value="TreeGrafter"/>
</dbReference>
<dbReference type="GO" id="GO:0000166">
    <property type="term" value="F:nucleotide binding"/>
    <property type="evidence" value="ECO:0007669"/>
    <property type="project" value="TreeGrafter"/>
</dbReference>
<dbReference type="CDD" id="cd11740">
    <property type="entry name" value="YajQ_like"/>
    <property type="match status" value="1"/>
</dbReference>
<dbReference type="FunFam" id="3.30.70.860:FF:000001">
    <property type="entry name" value="UPF0234 protein YajQ"/>
    <property type="match status" value="1"/>
</dbReference>
<dbReference type="FunFam" id="3.30.70.990:FF:000001">
    <property type="entry name" value="UPF0234 protein YajQ"/>
    <property type="match status" value="1"/>
</dbReference>
<dbReference type="Gene3D" id="3.30.70.860">
    <property type="match status" value="1"/>
</dbReference>
<dbReference type="Gene3D" id="3.30.70.990">
    <property type="entry name" value="YajQ-like, domain 2"/>
    <property type="match status" value="1"/>
</dbReference>
<dbReference type="HAMAP" id="MF_00632">
    <property type="entry name" value="YajQ"/>
    <property type="match status" value="1"/>
</dbReference>
<dbReference type="InterPro" id="IPR007551">
    <property type="entry name" value="DUF520"/>
</dbReference>
<dbReference type="InterPro" id="IPR035571">
    <property type="entry name" value="UPF0234-like_C"/>
</dbReference>
<dbReference type="InterPro" id="IPR035570">
    <property type="entry name" value="UPF0234_N"/>
</dbReference>
<dbReference type="InterPro" id="IPR036183">
    <property type="entry name" value="YajQ-like_sf"/>
</dbReference>
<dbReference type="NCBIfam" id="NF003819">
    <property type="entry name" value="PRK05412.1"/>
    <property type="match status" value="1"/>
</dbReference>
<dbReference type="PANTHER" id="PTHR30476">
    <property type="entry name" value="UPF0234 PROTEIN YAJQ"/>
    <property type="match status" value="1"/>
</dbReference>
<dbReference type="PANTHER" id="PTHR30476:SF0">
    <property type="entry name" value="UPF0234 PROTEIN YAJQ"/>
    <property type="match status" value="1"/>
</dbReference>
<dbReference type="Pfam" id="PF04461">
    <property type="entry name" value="DUF520"/>
    <property type="match status" value="1"/>
</dbReference>
<dbReference type="SUPFAM" id="SSF89963">
    <property type="entry name" value="YajQ-like"/>
    <property type="match status" value="2"/>
</dbReference>
<sequence length="163" mass="18344">MPSFDIVSEVDLQEARNAVDNASREVESRFDFRNVEASFELNDASKTIKVLSESDFQVNQLLDILRAKLLKRGIEGSSLDVPENIVHSGKTWFVEAKLKQGIESATQKKIVKMIKDSKLKVQAQIQGDEIRVTGKSRDDLQAVMAMVRGGDLGQPFQFKNFRD</sequence>
<proteinExistence type="inferred from homology"/>
<comment type="function">
    <text evidence="1">Nucleotide-binding protein.</text>
</comment>
<comment type="similarity">
    <text evidence="1">Belongs to the YajQ family.</text>
</comment>
<evidence type="ECO:0000255" key="1">
    <source>
        <dbReference type="HAMAP-Rule" id="MF_00632"/>
    </source>
</evidence>
<accession>B7LMG1</accession>
<reference key="1">
    <citation type="journal article" date="2009" name="PLoS Genet.">
        <title>Organised genome dynamics in the Escherichia coli species results in highly diverse adaptive paths.</title>
        <authorList>
            <person name="Touchon M."/>
            <person name="Hoede C."/>
            <person name="Tenaillon O."/>
            <person name="Barbe V."/>
            <person name="Baeriswyl S."/>
            <person name="Bidet P."/>
            <person name="Bingen E."/>
            <person name="Bonacorsi S."/>
            <person name="Bouchier C."/>
            <person name="Bouvet O."/>
            <person name="Calteau A."/>
            <person name="Chiapello H."/>
            <person name="Clermont O."/>
            <person name="Cruveiller S."/>
            <person name="Danchin A."/>
            <person name="Diard M."/>
            <person name="Dossat C."/>
            <person name="Karoui M.E."/>
            <person name="Frapy E."/>
            <person name="Garry L."/>
            <person name="Ghigo J.M."/>
            <person name="Gilles A.M."/>
            <person name="Johnson J."/>
            <person name="Le Bouguenec C."/>
            <person name="Lescat M."/>
            <person name="Mangenot S."/>
            <person name="Martinez-Jehanne V."/>
            <person name="Matic I."/>
            <person name="Nassif X."/>
            <person name="Oztas S."/>
            <person name="Petit M.A."/>
            <person name="Pichon C."/>
            <person name="Rouy Z."/>
            <person name="Ruf C.S."/>
            <person name="Schneider D."/>
            <person name="Tourret J."/>
            <person name="Vacherie B."/>
            <person name="Vallenet D."/>
            <person name="Medigue C."/>
            <person name="Rocha E.P.C."/>
            <person name="Denamur E."/>
        </authorList>
    </citation>
    <scope>NUCLEOTIDE SEQUENCE [LARGE SCALE GENOMIC DNA]</scope>
    <source>
        <strain>ATCC 35469 / DSM 13698 / BCRC 15582 / CCUG 18766 / IAM 14443 / JCM 21226 / LMG 7866 / NBRC 102419 / NCTC 12128 / CDC 0568-73</strain>
    </source>
</reference>
<name>YAJQ_ESCF3</name>
<protein>
    <recommendedName>
        <fullName evidence="1">Nucleotide-binding protein YajQ</fullName>
    </recommendedName>
</protein>
<keyword id="KW-0547">Nucleotide-binding</keyword>
<gene>
    <name evidence="1" type="primary">yajQ</name>
    <name type="ordered locus">EFER_2599</name>
</gene>
<organism>
    <name type="scientific">Escherichia fergusonii (strain ATCC 35469 / DSM 13698 / CCUG 18766 / IAM 14443 / JCM 21226 / LMG 7866 / NBRC 102419 / NCTC 12128 / CDC 0568-73)</name>
    <dbReference type="NCBI Taxonomy" id="585054"/>
    <lineage>
        <taxon>Bacteria</taxon>
        <taxon>Pseudomonadati</taxon>
        <taxon>Pseudomonadota</taxon>
        <taxon>Gammaproteobacteria</taxon>
        <taxon>Enterobacterales</taxon>
        <taxon>Enterobacteriaceae</taxon>
        <taxon>Escherichia</taxon>
    </lineage>
</organism>
<feature type="chain" id="PRO_1000130627" description="Nucleotide-binding protein YajQ">
    <location>
        <begin position="1"/>
        <end position="163"/>
    </location>
</feature>